<organism>
    <name type="scientific">Xenopus laevis</name>
    <name type="common">African clawed frog</name>
    <dbReference type="NCBI Taxonomy" id="8355"/>
    <lineage>
        <taxon>Eukaryota</taxon>
        <taxon>Metazoa</taxon>
        <taxon>Chordata</taxon>
        <taxon>Craniata</taxon>
        <taxon>Vertebrata</taxon>
        <taxon>Euteleostomi</taxon>
        <taxon>Amphibia</taxon>
        <taxon>Batrachia</taxon>
        <taxon>Anura</taxon>
        <taxon>Pipoidea</taxon>
        <taxon>Pipidae</taxon>
        <taxon>Xenopodinae</taxon>
        <taxon>Xenopus</taxon>
        <taxon>Xenopus</taxon>
    </lineage>
</organism>
<proteinExistence type="evidence at transcript level"/>
<feature type="chain" id="PRO_0000445569" description="Actin-related protein 2/3 complex subunit 1B-A">
    <location>
        <begin position="1"/>
        <end position="369"/>
    </location>
</feature>
<feature type="repeat" description="WD 1" evidence="2">
    <location>
        <begin position="6"/>
        <end position="45"/>
    </location>
</feature>
<feature type="repeat" description="WD 2" evidence="2">
    <location>
        <begin position="50"/>
        <end position="89"/>
    </location>
</feature>
<feature type="repeat" description="WD 3" evidence="2">
    <location>
        <begin position="94"/>
        <end position="135"/>
    </location>
</feature>
<feature type="repeat" description="WD 4" evidence="2">
    <location>
        <begin position="140"/>
        <end position="179"/>
    </location>
</feature>
<feature type="repeat" description="WD 5" evidence="2">
    <location>
        <begin position="200"/>
        <end position="239"/>
    </location>
</feature>
<feature type="repeat" description="WD 6" evidence="2">
    <location>
        <begin position="242"/>
        <end position="282"/>
    </location>
</feature>
<feature type="repeat" description="WD 7" evidence="2">
    <location>
        <begin position="321"/>
        <end position="364"/>
    </location>
</feature>
<feature type="sequence conflict" description="In Ref. 1; ABL63905." evidence="4" ref="1">
    <original>S</original>
    <variation>A</variation>
    <location>
        <position position="229"/>
    </location>
</feature>
<dbReference type="EMBL" id="EF011872">
    <property type="protein sequence ID" value="ABL63905.1"/>
    <property type="molecule type" value="mRNA"/>
</dbReference>
<dbReference type="EMBL" id="CM004482">
    <property type="protein sequence ID" value="OCT63972.1"/>
    <property type="molecule type" value="Genomic_DNA"/>
</dbReference>
<dbReference type="EMBL" id="BC045043">
    <property type="protein sequence ID" value="AAH45043.1"/>
    <property type="molecule type" value="mRNA"/>
</dbReference>
<dbReference type="RefSeq" id="NP_001080416.1">
    <property type="nucleotide sequence ID" value="NM_001086947.1"/>
</dbReference>
<dbReference type="SMR" id="Q7ZXD5"/>
<dbReference type="STRING" id="8355.Q7ZXD5"/>
<dbReference type="PaxDb" id="8355-Q7ZXD5"/>
<dbReference type="DNASU" id="380108"/>
<dbReference type="GeneID" id="380108"/>
<dbReference type="KEGG" id="xla:380108"/>
<dbReference type="AGR" id="Xenbase:XB-GENE-490414"/>
<dbReference type="CTD" id="380108"/>
<dbReference type="Xenbase" id="XB-GENE-490414">
    <property type="gene designation" value="arpc1b.L"/>
</dbReference>
<dbReference type="OMA" id="ELKEHNW"/>
<dbReference type="OrthoDB" id="406844at2759"/>
<dbReference type="Proteomes" id="UP000186698">
    <property type="component" value="Chromosome 9_10L"/>
</dbReference>
<dbReference type="Proteomes" id="UP000694892">
    <property type="component" value="Chromosome 9_10L"/>
</dbReference>
<dbReference type="Bgee" id="380108">
    <property type="expression patterns" value="Expressed in spleen and 19 other cell types or tissues"/>
</dbReference>
<dbReference type="GO" id="GO:0005885">
    <property type="term" value="C:Arp2/3 protein complex"/>
    <property type="evidence" value="ECO:0000318"/>
    <property type="project" value="GO_Central"/>
</dbReference>
<dbReference type="GO" id="GO:0005737">
    <property type="term" value="C:cytoplasm"/>
    <property type="evidence" value="ECO:0007669"/>
    <property type="project" value="UniProtKB-KW"/>
</dbReference>
<dbReference type="GO" id="GO:0005634">
    <property type="term" value="C:nucleus"/>
    <property type="evidence" value="ECO:0007669"/>
    <property type="project" value="UniProtKB-SubCell"/>
</dbReference>
<dbReference type="GO" id="GO:0051015">
    <property type="term" value="F:actin filament binding"/>
    <property type="evidence" value="ECO:0000318"/>
    <property type="project" value="GO_Central"/>
</dbReference>
<dbReference type="GO" id="GO:0034314">
    <property type="term" value="P:Arp2/3 complex-mediated actin nucleation"/>
    <property type="evidence" value="ECO:0000318"/>
    <property type="project" value="GO_Central"/>
</dbReference>
<dbReference type="FunFam" id="2.130.10.10:FF:000030">
    <property type="entry name" value="Actin-related protein 2/3 complex subunit"/>
    <property type="match status" value="1"/>
</dbReference>
<dbReference type="Gene3D" id="2.130.10.10">
    <property type="entry name" value="YVTN repeat-like/Quinoprotein amine dehydrogenase"/>
    <property type="match status" value="1"/>
</dbReference>
<dbReference type="InterPro" id="IPR017383">
    <property type="entry name" value="ARPC1"/>
</dbReference>
<dbReference type="InterPro" id="IPR015943">
    <property type="entry name" value="WD40/YVTN_repeat-like_dom_sf"/>
</dbReference>
<dbReference type="InterPro" id="IPR036322">
    <property type="entry name" value="WD40_repeat_dom_sf"/>
</dbReference>
<dbReference type="InterPro" id="IPR001680">
    <property type="entry name" value="WD40_rpt"/>
</dbReference>
<dbReference type="PANTHER" id="PTHR10709">
    <property type="entry name" value="ACTIN-RELATED PROTEIN 2/3 COMPLEX SUBUNIT 1"/>
    <property type="match status" value="1"/>
</dbReference>
<dbReference type="PANTHER" id="PTHR10709:SF10">
    <property type="entry name" value="ACTIN-RELATED PROTEIN 2_3 COMPLEX SUBUNIT 1B"/>
    <property type="match status" value="1"/>
</dbReference>
<dbReference type="Pfam" id="PF00400">
    <property type="entry name" value="WD40"/>
    <property type="match status" value="2"/>
</dbReference>
<dbReference type="PIRSF" id="PIRSF038093">
    <property type="entry name" value="ARP2/3_su1"/>
    <property type="match status" value="1"/>
</dbReference>
<dbReference type="SMART" id="SM00320">
    <property type="entry name" value="WD40"/>
    <property type="match status" value="6"/>
</dbReference>
<dbReference type="SUPFAM" id="SSF50978">
    <property type="entry name" value="WD40 repeat-like"/>
    <property type="match status" value="1"/>
</dbReference>
<dbReference type="PROSITE" id="PS50082">
    <property type="entry name" value="WD_REPEATS_2"/>
    <property type="match status" value="1"/>
</dbReference>
<dbReference type="PROSITE" id="PS50294">
    <property type="entry name" value="WD_REPEATS_REGION"/>
    <property type="match status" value="1"/>
</dbReference>
<sequence length="369" mass="41444">MAYHSFLLEPITCHAWNKDATQIAFCPNSHDVHIYKKDGDKWSKIHELKEHNGHVTGIDWAPESNRIVTCGTDRNAYVWTLKNNVWKPTLVILRINRAARCVKWSPKENKFAVGSGSRLISICYFEQENDWWVCKHIKKPIRSTVLSLDWHPNNVLLAAGSSDFKSRIFSAYIKEVEERPAPTPWGSKMPFGELMFESSSSCGWVHSVCFSHSGDRMAWVSHDSTICISDATKKMRVTSLITDTLPLLCVTFITENSLVAAGHDCFPVLYIYDEAQGTLSFGGKLDIPKQSSQRGMTARERFQNLDKKASSDTNNITLDSLHKNSISQLSVLSGGKAKCSKFCTTGLDGGMCIWDVKSLESAMKDLKIK</sequence>
<name>AR1BA_XENLA</name>
<evidence type="ECO:0000250" key="1">
    <source>
        <dbReference type="UniProtKB" id="O15143"/>
    </source>
</evidence>
<evidence type="ECO:0000255" key="2"/>
<evidence type="ECO:0000269" key="3">
    <source>
    </source>
</evidence>
<evidence type="ECO:0000305" key="4"/>
<evidence type="ECO:0000312" key="5">
    <source>
        <dbReference type="EMBL" id="OCT63972.1"/>
    </source>
</evidence>
<comment type="function">
    <text evidence="1 3">Component of the Arp2/3 complex, a multiprotein complex that mediates actin polymerization upon stimulation by nucleation-promoting factor (NPF) (PubMed:17178911). The Arp2/3 complex mediates the formation of branched actin networks in the cytoplasm, providing the force for cell motility (PubMed:17178911). In addition to its role in the cytoplasmic cytoskeleton, the Arp2/3 complex also promotes actin polymerization in the nucleus, thereby regulating gene transcription and repair of damaged DNA (By similarity). The Arp2/3 complex promotes homologous recombination (HR) repair in response to DNA damage by promoting nuclear actin polymerization, leading to drive motility of double-strand breaks (DSBs) (By similarity).</text>
</comment>
<comment type="subunit">
    <text evidence="1">Component of the Arp2/3 complex composed of actr2/arp2, actr3/arp3, arpc1 (arpc1a or arpc1b), arpc2, arpc3, arpc4 and arpc5.</text>
</comment>
<comment type="subcellular location">
    <subcellularLocation>
        <location evidence="3">Cytoplasm</location>
        <location evidence="3">Cytoskeleton</location>
    </subcellularLocation>
    <subcellularLocation>
        <location evidence="1">Nucleus</location>
    </subcellularLocation>
</comment>
<comment type="similarity">
    <text evidence="4">Belongs to the WD repeat ARPC1 family.</text>
</comment>
<keyword id="KW-0009">Actin-binding</keyword>
<keyword id="KW-0963">Cytoplasm</keyword>
<keyword id="KW-0206">Cytoskeleton</keyword>
<keyword id="KW-0539">Nucleus</keyword>
<keyword id="KW-1185">Reference proteome</keyword>
<keyword id="KW-0677">Repeat</keyword>
<keyword id="KW-0853">WD repeat</keyword>
<gene>
    <name type="primary">arpc1b-a</name>
    <name evidence="5" type="ORF">XELAEV_18045069mg</name>
</gene>
<protein>
    <recommendedName>
        <fullName evidence="4">Actin-related protein 2/3 complex subunit 1B-A</fullName>
    </recommendedName>
</protein>
<accession>Q7ZXD5</accession>
<accession>A1DPL3</accession>
<reference key="1">
    <citation type="journal article" date="2006" name="J. Cell Biol.">
        <title>Actin turnover-dependent fast dissociation of capping protein in the dendritic nucleation actin network: evidence of frequent filament severing.</title>
        <authorList>
            <person name="Miyoshi T."/>
            <person name="Tsuji T."/>
            <person name="Higashida C."/>
            <person name="Hertzog M."/>
            <person name="Fujita A."/>
            <person name="Narumiya S."/>
            <person name="Scita G."/>
            <person name="Watanabe N."/>
        </authorList>
    </citation>
    <scope>NUCLEOTIDE SEQUENCE [MRNA]</scope>
    <scope>FUNCTION</scope>
    <scope>SUBCELLULAR LOCATION</scope>
</reference>
<reference key="2">
    <citation type="journal article" date="2016" name="Nature">
        <title>Genome evolution in the allotetraploid frog Xenopus laevis.</title>
        <authorList>
            <person name="Session A.M."/>
            <person name="Uno Y."/>
            <person name="Kwon T."/>
            <person name="Chapman J.A."/>
            <person name="Toyoda A."/>
            <person name="Takahashi S."/>
            <person name="Fukui A."/>
            <person name="Hikosaka A."/>
            <person name="Suzuki A."/>
            <person name="Kondo M."/>
            <person name="van Heeringen S.J."/>
            <person name="Quigley I."/>
            <person name="Heinz S."/>
            <person name="Ogino H."/>
            <person name="Ochi H."/>
            <person name="Hellsten U."/>
            <person name="Lyons J.B."/>
            <person name="Simakov O."/>
            <person name="Putnam N."/>
            <person name="Stites J."/>
            <person name="Kuroki Y."/>
            <person name="Tanaka T."/>
            <person name="Michiue T."/>
            <person name="Watanabe M."/>
            <person name="Bogdanovic O."/>
            <person name="Lister R."/>
            <person name="Georgiou G."/>
            <person name="Paranjpe S.S."/>
            <person name="van Kruijsbergen I."/>
            <person name="Shu S."/>
            <person name="Carlson J."/>
            <person name="Kinoshita T."/>
            <person name="Ohta Y."/>
            <person name="Mawaribuchi S."/>
            <person name="Jenkins J."/>
            <person name="Grimwood J."/>
            <person name="Schmutz J."/>
            <person name="Mitros T."/>
            <person name="Mozaffari S.V."/>
            <person name="Suzuki Y."/>
            <person name="Haramoto Y."/>
            <person name="Yamamoto T.S."/>
            <person name="Takagi C."/>
            <person name="Heald R."/>
            <person name="Miller K."/>
            <person name="Haudenschild C."/>
            <person name="Kitzman J."/>
            <person name="Nakayama T."/>
            <person name="Izutsu Y."/>
            <person name="Robert J."/>
            <person name="Fortriede J."/>
            <person name="Burns K."/>
            <person name="Lotay V."/>
            <person name="Karimi K."/>
            <person name="Yasuoka Y."/>
            <person name="Dichmann D.S."/>
            <person name="Flajnik M.F."/>
            <person name="Houston D.W."/>
            <person name="Shendure J."/>
            <person name="DuPasquier L."/>
            <person name="Vize P.D."/>
            <person name="Zorn A.M."/>
            <person name="Ito M."/>
            <person name="Marcotte E.M."/>
            <person name="Wallingford J.B."/>
            <person name="Ito Y."/>
            <person name="Asashima M."/>
            <person name="Ueno N."/>
            <person name="Matsuda Y."/>
            <person name="Veenstra G.J."/>
            <person name="Fujiyama A."/>
            <person name="Harland R.M."/>
            <person name="Taira M."/>
            <person name="Rokhsar D.S."/>
        </authorList>
    </citation>
    <scope>NUCLEOTIDE SEQUENCE [LARGE SCALE GENOMIC DNA]</scope>
    <source>
        <strain>J</strain>
    </source>
</reference>
<reference key="3">
    <citation type="submission" date="2003-01" db="EMBL/GenBank/DDBJ databases">
        <authorList>
            <consortium name="NIH - Xenopus Gene Collection (XGC) project"/>
        </authorList>
    </citation>
    <scope>NUCLEOTIDE SEQUENCE [LARGE SCALE MRNA]</scope>
    <source>
        <tissue>Embryo</tissue>
    </source>
</reference>